<dbReference type="EC" id="4.1.3.40"/>
<dbReference type="EMBL" id="AL583917">
    <property type="protein sequence ID" value="CAC29641.1"/>
    <property type="molecule type" value="Genomic_DNA"/>
</dbReference>
<dbReference type="PIR" id="E86925">
    <property type="entry name" value="E86925"/>
</dbReference>
<dbReference type="RefSeq" id="NP_301227.1">
    <property type="nucleotide sequence ID" value="NC_002677.1"/>
</dbReference>
<dbReference type="RefSeq" id="WP_010907552.1">
    <property type="nucleotide sequence ID" value="NC_002677.1"/>
</dbReference>
<dbReference type="SMR" id="Q9CD83"/>
<dbReference type="STRING" id="272631.gene:17573948"/>
<dbReference type="KEGG" id="mle:ML0133"/>
<dbReference type="PATRIC" id="fig|272631.5.peg.201"/>
<dbReference type="Leproma" id="ML0133"/>
<dbReference type="eggNOG" id="COG3161">
    <property type="taxonomic scope" value="Bacteria"/>
</dbReference>
<dbReference type="HOGENOM" id="CLU_107938_1_0_11"/>
<dbReference type="OrthoDB" id="6297849at2"/>
<dbReference type="Proteomes" id="UP000000806">
    <property type="component" value="Chromosome"/>
</dbReference>
<dbReference type="GO" id="GO:0008813">
    <property type="term" value="F:chorismate lyase activity"/>
    <property type="evidence" value="ECO:0007669"/>
    <property type="project" value="UniProtKB-EC"/>
</dbReference>
<dbReference type="Gene3D" id="3.40.1410.10">
    <property type="entry name" value="Chorismate lyase-like"/>
    <property type="match status" value="1"/>
</dbReference>
<dbReference type="InterPro" id="IPR028978">
    <property type="entry name" value="Chorismate_lyase_/UTRA_dom_sf"/>
</dbReference>
<dbReference type="InterPro" id="IPR002800">
    <property type="entry name" value="Rv2949c-like"/>
</dbReference>
<dbReference type="Pfam" id="PF01947">
    <property type="entry name" value="Rv2949c-like"/>
    <property type="match status" value="1"/>
</dbReference>
<dbReference type="SUPFAM" id="SSF64288">
    <property type="entry name" value="Chorismate lyase-like"/>
    <property type="match status" value="1"/>
</dbReference>
<feature type="chain" id="PRO_0000240509" description="Chorismate pyruvate-lyase">
    <location>
        <begin position="1"/>
        <end position="210"/>
    </location>
</feature>
<sequence length="210" mass="24045">MTNRTLSREEIRKLDRDLRILVATNGTLTRVLNVVANEEIVVDIINQQLLDVAPKIPELENLKIGRILQRDILLKGQKSGILFVAAESLIVIDLLPTAITTYLTKTHHPIGEIMAASRIETYKEDAQVWIGDLPCWLADYGYWDLPKRAVGRRYRIIAGGQPVIITTEYFLRSVFQDTPREELDRCQYSNDIDTRSGDRFVLHGRVFKNL</sequence>
<protein>
    <recommendedName>
        <fullName>Chorismate pyruvate-lyase</fullName>
        <ecNumber>4.1.3.40</ecNumber>
    </recommendedName>
    <alternativeName>
        <fullName>4-HB synthase</fullName>
    </alternativeName>
    <alternativeName>
        <fullName>p-hydroxybenzoic acid synthase</fullName>
    </alternativeName>
</protein>
<keyword id="KW-0456">Lyase</keyword>
<keyword id="KW-1185">Reference proteome</keyword>
<gene>
    <name type="ordered locus">ML0133</name>
</gene>
<reference key="1">
    <citation type="journal article" date="2001" name="Nature">
        <title>Massive gene decay in the leprosy bacillus.</title>
        <authorList>
            <person name="Cole S.T."/>
            <person name="Eiglmeier K."/>
            <person name="Parkhill J."/>
            <person name="James K.D."/>
            <person name="Thomson N.R."/>
            <person name="Wheeler P.R."/>
            <person name="Honore N."/>
            <person name="Garnier T."/>
            <person name="Churcher C.M."/>
            <person name="Harris D.E."/>
            <person name="Mungall K.L."/>
            <person name="Basham D."/>
            <person name="Brown D."/>
            <person name="Chillingworth T."/>
            <person name="Connor R."/>
            <person name="Davies R.M."/>
            <person name="Devlin K."/>
            <person name="Duthoy S."/>
            <person name="Feltwell T."/>
            <person name="Fraser A."/>
            <person name="Hamlin N."/>
            <person name="Holroyd S."/>
            <person name="Hornsby T."/>
            <person name="Jagels K."/>
            <person name="Lacroix C."/>
            <person name="Maclean J."/>
            <person name="Moule S."/>
            <person name="Murphy L.D."/>
            <person name="Oliver K."/>
            <person name="Quail M.A."/>
            <person name="Rajandream M.A."/>
            <person name="Rutherford K.M."/>
            <person name="Rutter S."/>
            <person name="Seeger K."/>
            <person name="Simon S."/>
            <person name="Simmonds M."/>
            <person name="Skelton J."/>
            <person name="Squares R."/>
            <person name="Squares S."/>
            <person name="Stevens K."/>
            <person name="Taylor K."/>
            <person name="Whitehead S."/>
            <person name="Woodward J.R."/>
            <person name="Barrell B.G."/>
        </authorList>
    </citation>
    <scope>NUCLEOTIDE SEQUENCE [LARGE SCALE GENOMIC DNA]</scope>
    <source>
        <strain>TN</strain>
    </source>
</reference>
<comment type="function">
    <text evidence="1">Removes the pyruvyl group from chorismate to provide 4-hydroxybenzoate (4HB). Involved in the synthesis of glycosylated p-hydroxybenzoic acid methyl esters (p-HBADs) and phenolic glycolipids (PGL) that play important roles in the pathogenesis of mycobacterial infections (By similarity).</text>
</comment>
<comment type="catalytic activity">
    <reaction>
        <text>chorismate = 4-hydroxybenzoate + pyruvate</text>
        <dbReference type="Rhea" id="RHEA:16505"/>
        <dbReference type="ChEBI" id="CHEBI:15361"/>
        <dbReference type="ChEBI" id="CHEBI:17879"/>
        <dbReference type="ChEBI" id="CHEBI:29748"/>
        <dbReference type="EC" id="4.1.3.40"/>
    </reaction>
</comment>
<comment type="similarity">
    <text evidence="2">Belongs to the chorismate pyruvate-lyase type 2 family.</text>
</comment>
<name>PHBS_MYCLE</name>
<organism>
    <name type="scientific">Mycobacterium leprae (strain TN)</name>
    <dbReference type="NCBI Taxonomy" id="272631"/>
    <lineage>
        <taxon>Bacteria</taxon>
        <taxon>Bacillati</taxon>
        <taxon>Actinomycetota</taxon>
        <taxon>Actinomycetes</taxon>
        <taxon>Mycobacteriales</taxon>
        <taxon>Mycobacteriaceae</taxon>
        <taxon>Mycobacterium</taxon>
    </lineage>
</organism>
<evidence type="ECO:0000250" key="1"/>
<evidence type="ECO:0000305" key="2"/>
<proteinExistence type="inferred from homology"/>
<accession>Q9CD83</accession>